<name>RLMM_KLEP3</name>
<dbReference type="EC" id="2.1.1.186" evidence="1"/>
<dbReference type="EMBL" id="CP000964">
    <property type="protein sequence ID" value="ACI08800.1"/>
    <property type="molecule type" value="Genomic_DNA"/>
</dbReference>
<dbReference type="SMR" id="B5XUY0"/>
<dbReference type="KEGG" id="kpe:KPK_0960"/>
<dbReference type="HOGENOM" id="CLU_043780_0_0_6"/>
<dbReference type="Proteomes" id="UP000001734">
    <property type="component" value="Chromosome"/>
</dbReference>
<dbReference type="GO" id="GO:0005737">
    <property type="term" value="C:cytoplasm"/>
    <property type="evidence" value="ECO:0007669"/>
    <property type="project" value="UniProtKB-SubCell"/>
</dbReference>
<dbReference type="GO" id="GO:0008757">
    <property type="term" value="F:S-adenosylmethionine-dependent methyltransferase activity"/>
    <property type="evidence" value="ECO:0007669"/>
    <property type="project" value="UniProtKB-UniRule"/>
</dbReference>
<dbReference type="GO" id="GO:0032259">
    <property type="term" value="P:methylation"/>
    <property type="evidence" value="ECO:0007669"/>
    <property type="project" value="UniProtKB-KW"/>
</dbReference>
<dbReference type="GO" id="GO:0006364">
    <property type="term" value="P:rRNA processing"/>
    <property type="evidence" value="ECO:0007669"/>
    <property type="project" value="UniProtKB-UniRule"/>
</dbReference>
<dbReference type="FunFam" id="3.30.2300.20:FF:000001">
    <property type="entry name" value="Ribosomal RNA large subunit methyltransferase M"/>
    <property type="match status" value="1"/>
</dbReference>
<dbReference type="FunFam" id="3.40.50.150:FF:000020">
    <property type="entry name" value="Ribosomal RNA large subunit methyltransferase M"/>
    <property type="match status" value="1"/>
</dbReference>
<dbReference type="Gene3D" id="3.30.2300.20">
    <property type="match status" value="1"/>
</dbReference>
<dbReference type="Gene3D" id="3.30.70.2810">
    <property type="match status" value="1"/>
</dbReference>
<dbReference type="Gene3D" id="3.40.50.150">
    <property type="entry name" value="Vaccinia Virus protein VP39"/>
    <property type="match status" value="1"/>
</dbReference>
<dbReference type="HAMAP" id="MF_01551">
    <property type="entry name" value="23SrRNA_methyltr_M"/>
    <property type="match status" value="1"/>
</dbReference>
<dbReference type="InterPro" id="IPR040739">
    <property type="entry name" value="RlmM_FDX"/>
</dbReference>
<dbReference type="InterPro" id="IPR048646">
    <property type="entry name" value="RlmM_THUMP-like"/>
</dbReference>
<dbReference type="InterPro" id="IPR002877">
    <property type="entry name" value="RNA_MeTrfase_FtsJ_dom"/>
</dbReference>
<dbReference type="InterPro" id="IPR011224">
    <property type="entry name" value="rRNA_MeTrfase_M"/>
</dbReference>
<dbReference type="InterPro" id="IPR029063">
    <property type="entry name" value="SAM-dependent_MTases_sf"/>
</dbReference>
<dbReference type="NCBIfam" id="NF008734">
    <property type="entry name" value="PRK11760.1"/>
    <property type="match status" value="1"/>
</dbReference>
<dbReference type="PANTHER" id="PTHR37524">
    <property type="entry name" value="RIBOSOMAL RNA LARGE SUBUNIT METHYLTRANSFERASE M"/>
    <property type="match status" value="1"/>
</dbReference>
<dbReference type="PANTHER" id="PTHR37524:SF2">
    <property type="entry name" value="RIBOSOMAL RNA METHYLTRANSFERASE FTSJ DOMAIN-CONTAINING PROTEIN"/>
    <property type="match status" value="1"/>
</dbReference>
<dbReference type="Pfam" id="PF01728">
    <property type="entry name" value="FtsJ"/>
    <property type="match status" value="1"/>
</dbReference>
<dbReference type="Pfam" id="PF18125">
    <property type="entry name" value="RlmM_FDX"/>
    <property type="match status" value="1"/>
</dbReference>
<dbReference type="Pfam" id="PF21239">
    <property type="entry name" value="RLMM_N"/>
    <property type="match status" value="1"/>
</dbReference>
<dbReference type="PIRSF" id="PIRSF028774">
    <property type="entry name" value="UCP028774"/>
    <property type="match status" value="1"/>
</dbReference>
<dbReference type="SUPFAM" id="SSF53335">
    <property type="entry name" value="S-adenosyl-L-methionine-dependent methyltransferases"/>
    <property type="match status" value="1"/>
</dbReference>
<evidence type="ECO:0000255" key="1">
    <source>
        <dbReference type="HAMAP-Rule" id="MF_01551"/>
    </source>
</evidence>
<comment type="function">
    <text evidence="1">Catalyzes the 2'-O-methylation at nucleotide C2498 in 23S rRNA.</text>
</comment>
<comment type="catalytic activity">
    <reaction evidence="1">
        <text>cytidine(2498) in 23S rRNA + S-adenosyl-L-methionine = 2'-O-methylcytidine(2498) in 23S rRNA + S-adenosyl-L-homocysteine + H(+)</text>
        <dbReference type="Rhea" id="RHEA:42788"/>
        <dbReference type="Rhea" id="RHEA-COMP:10244"/>
        <dbReference type="Rhea" id="RHEA-COMP:10245"/>
        <dbReference type="ChEBI" id="CHEBI:15378"/>
        <dbReference type="ChEBI" id="CHEBI:57856"/>
        <dbReference type="ChEBI" id="CHEBI:59789"/>
        <dbReference type="ChEBI" id="CHEBI:74495"/>
        <dbReference type="ChEBI" id="CHEBI:82748"/>
        <dbReference type="EC" id="2.1.1.186"/>
    </reaction>
</comment>
<comment type="subunit">
    <text evidence="1">Monomer.</text>
</comment>
<comment type="subcellular location">
    <subcellularLocation>
        <location evidence="1">Cytoplasm</location>
    </subcellularLocation>
</comment>
<comment type="similarity">
    <text evidence="1">Belongs to the class I-like SAM-binding methyltransferase superfamily. RNA methyltransferase RlmE family. RlmM subfamily.</text>
</comment>
<accession>B5XUY0</accession>
<protein>
    <recommendedName>
        <fullName evidence="1">Ribosomal RNA large subunit methyltransferase M</fullName>
        <ecNumber evidence="1">2.1.1.186</ecNumber>
    </recommendedName>
    <alternativeName>
        <fullName evidence="1">23S rRNA (cytidine2498-2'-O)-methyltransferase</fullName>
    </alternativeName>
    <alternativeName>
        <fullName evidence="1">23S rRNA 2'-O-ribose methyltransferase RlmM</fullName>
    </alternativeName>
</protein>
<keyword id="KW-0963">Cytoplasm</keyword>
<keyword id="KW-0489">Methyltransferase</keyword>
<keyword id="KW-0698">rRNA processing</keyword>
<keyword id="KW-0949">S-adenosyl-L-methionine</keyword>
<keyword id="KW-0808">Transferase</keyword>
<feature type="chain" id="PRO_1000201521" description="Ribosomal RNA large subunit methyltransferase M">
    <location>
        <begin position="1"/>
        <end position="366"/>
    </location>
</feature>
<feature type="active site" description="Proton acceptor" evidence="1">
    <location>
        <position position="306"/>
    </location>
</feature>
<feature type="binding site" evidence="1">
    <location>
        <position position="188"/>
    </location>
    <ligand>
        <name>S-adenosyl-L-methionine</name>
        <dbReference type="ChEBI" id="CHEBI:59789"/>
    </ligand>
</feature>
<feature type="binding site" evidence="1">
    <location>
        <begin position="221"/>
        <end position="224"/>
    </location>
    <ligand>
        <name>S-adenosyl-L-methionine</name>
        <dbReference type="ChEBI" id="CHEBI:59789"/>
    </ligand>
</feature>
<feature type="binding site" evidence="1">
    <location>
        <position position="240"/>
    </location>
    <ligand>
        <name>S-adenosyl-L-methionine</name>
        <dbReference type="ChEBI" id="CHEBI:59789"/>
    </ligand>
</feature>
<feature type="binding site" evidence="1">
    <location>
        <position position="260"/>
    </location>
    <ligand>
        <name>S-adenosyl-L-methionine</name>
        <dbReference type="ChEBI" id="CHEBI:59789"/>
    </ligand>
</feature>
<feature type="binding site" evidence="1">
    <location>
        <position position="277"/>
    </location>
    <ligand>
        <name>S-adenosyl-L-methionine</name>
        <dbReference type="ChEBI" id="CHEBI:59789"/>
    </ligand>
</feature>
<organism>
    <name type="scientific">Klebsiella pneumoniae (strain 342)</name>
    <dbReference type="NCBI Taxonomy" id="507522"/>
    <lineage>
        <taxon>Bacteria</taxon>
        <taxon>Pseudomonadati</taxon>
        <taxon>Pseudomonadota</taxon>
        <taxon>Gammaproteobacteria</taxon>
        <taxon>Enterobacterales</taxon>
        <taxon>Enterobacteriaceae</taxon>
        <taxon>Klebsiella/Raoultella group</taxon>
        <taxon>Klebsiella</taxon>
        <taxon>Klebsiella pneumoniae complex</taxon>
    </lineage>
</organism>
<gene>
    <name evidence="1" type="primary">rlmM</name>
    <name type="ordered locus">KPK_0960</name>
</gene>
<reference key="1">
    <citation type="journal article" date="2008" name="PLoS Genet.">
        <title>Complete genome sequence of the N2-fixing broad host range endophyte Klebsiella pneumoniae 342 and virulence predictions verified in mice.</title>
        <authorList>
            <person name="Fouts D.E."/>
            <person name="Tyler H.L."/>
            <person name="DeBoy R.T."/>
            <person name="Daugherty S."/>
            <person name="Ren Q."/>
            <person name="Badger J.H."/>
            <person name="Durkin A.S."/>
            <person name="Huot H."/>
            <person name="Shrivastava S."/>
            <person name="Kothari S."/>
            <person name="Dodson R.J."/>
            <person name="Mohamoud Y."/>
            <person name="Khouri H."/>
            <person name="Roesch L.F.W."/>
            <person name="Krogfelt K.A."/>
            <person name="Struve C."/>
            <person name="Triplett E.W."/>
            <person name="Methe B.A."/>
        </authorList>
    </citation>
    <scope>NUCLEOTIDE SEQUENCE [LARGE SCALE GENOMIC DNA]</scope>
    <source>
        <strain>342</strain>
    </source>
</reference>
<proteinExistence type="inferred from homology"/>
<sequence length="366" mass="41917">MNKVVLYCRPGFEKECAAEITDKAARLEVFGFARVKEDSGYVIFEGYQQDDGEKLVRDLPFSSLIFARQMFVVGELLRDLPPEDRITPIVGMLQGVVEKGGELRVEVADTNESKELMKFCRKFTVPLRAALREAGVLTNYETPKRPVVHVFFIAPGCCYTGYSYSNNNSPFYMGIPRLKFPSDAPSRSTLKLEEAFHVFIPADEWDERLANGMYAVDLGACPGGWTYQLVKRNMWVSSVDNGPMAQSLMDTGQVTWLREDGFRYRPNRNNISWMVCDMVEKPAKVAALMAQWLVNGWCRETIFNLKLPMKKRYEEVSQNLAYIQAQLDEHGINAQIQARQLYHDREEVTVHVRRLWAAVGGRRDER</sequence>